<keyword id="KW-1015">Disulfide bond</keyword>
<keyword id="KW-0964">Secreted</keyword>
<keyword id="KW-0732">Signal</keyword>
<keyword id="KW-0800">Toxin</keyword>
<comment type="subcellular location">
    <subcellularLocation>
        <location evidence="4">Secreted</location>
    </subcellularLocation>
</comment>
<comment type="tissue specificity">
    <text evidence="4">Expressed by the venom gland.</text>
</comment>
<comment type="PTM">
    <text evidence="3">Contains 8 disulfide bonds.</text>
</comment>
<comment type="similarity">
    <text evidence="3">Belongs to the scoloptoxin-11 family.</text>
</comment>
<comment type="caution">
    <text evidence="4">All S.morsitans family members described in 'Undeheim et al., 2014' have not been imported into UniProtKB. Please, refer to this paper to access them.</text>
</comment>
<comment type="online information" name="National Center for Biotechnology Information (NCBI)">
    <link uri="https://www.ncbi.nlm.nih.gov/nuccore/GASH01000133"/>
</comment>
<sequence>MYLFLMINYFVLANSFDFQGYSMNARNEKSKQKRSSSETDYVCISNDYCAFLQKNTQNLYTLPICKCPGDNECPLTWDPDDGRTLIQGDIHFKFCSSAPVGLKQCGSDDIAYTAMWNKNLKTNTSEFTGEVFCECPKEVTHFLMKTKNEEGIEGQAYKCPKLQTCTSEEICVHIYNYTNNFFEIKYCKCPDGQSCPDELNSAAETDVKKERIRYGMKCK</sequence>
<evidence type="ECO:0000255" key="1"/>
<evidence type="ECO:0000303" key="2">
    <source>
    </source>
</evidence>
<evidence type="ECO:0000305" key="3"/>
<evidence type="ECO:0000305" key="4">
    <source>
    </source>
</evidence>
<reference key="1">
    <citation type="journal article" date="2014" name="Mol. Biol. Evol.">
        <title>Clawing through evolution: toxin diversification and convergence in the ancient lineage Chilopoda (centipedes).</title>
        <authorList>
            <person name="Undheim E.A."/>
            <person name="Jones A."/>
            <person name="Clauser K.R."/>
            <person name="Holland J.W."/>
            <person name="Pineda S.S."/>
            <person name="King G.F."/>
            <person name="Fry B.G."/>
        </authorList>
    </citation>
    <scope>NUCLEOTIDE SEQUENCE [MRNA]</scope>
    <scope>NOMENCLATURE</scope>
    <source>
        <tissue>Venom gland</tissue>
    </source>
</reference>
<accession>P0DQA2</accession>
<proteinExistence type="evidence at transcript level"/>
<protein>
    <recommendedName>
        <fullName evidence="2">U-scoloptoxin(11)-Sm7a</fullName>
        <shortName evidence="2">U-SLPTX(11)-Sm7a</shortName>
    </recommendedName>
</protein>
<organism>
    <name type="scientific">Scolopendra morsitans</name>
    <name type="common">Tanzanian blue ringleg centipede</name>
    <dbReference type="NCBI Taxonomy" id="943129"/>
    <lineage>
        <taxon>Eukaryota</taxon>
        <taxon>Metazoa</taxon>
        <taxon>Ecdysozoa</taxon>
        <taxon>Arthropoda</taxon>
        <taxon>Myriapoda</taxon>
        <taxon>Chilopoda</taxon>
        <taxon>Pleurostigmophora</taxon>
        <taxon>Scolopendromorpha</taxon>
        <taxon>Scolopendridae</taxon>
        <taxon>Scolopendra</taxon>
    </lineage>
</organism>
<name>TXB7A_SCOMO</name>
<dbReference type="SMR" id="P0DQA2"/>
<dbReference type="GO" id="GO:0005576">
    <property type="term" value="C:extracellular region"/>
    <property type="evidence" value="ECO:0007669"/>
    <property type="project" value="UniProtKB-SubCell"/>
</dbReference>
<dbReference type="GO" id="GO:0090729">
    <property type="term" value="F:toxin activity"/>
    <property type="evidence" value="ECO:0007669"/>
    <property type="project" value="UniProtKB-KW"/>
</dbReference>
<dbReference type="Gene3D" id="2.20.20.160">
    <property type="match status" value="2"/>
</dbReference>
<feature type="signal peptide" evidence="1">
    <location>
        <begin position="1"/>
        <end position="15"/>
    </location>
</feature>
<feature type="chain" id="PRO_0000446777" description="U-scoloptoxin(11)-Sm7a" evidence="3">
    <location>
        <begin position="16"/>
        <end position="219"/>
    </location>
</feature>